<sequence>MGRGRVELKRIENKINRQVTFAKRRNGLLKKAYELSVLCDAEVALIIFSNRGKLYEFCSSSSMIRTLERYQKCNYGPPEPNVPSREALAVELSSQQEYLKLKERYDALQRTQRNLLGEDLGPLSTKELELLERQLDSSLKQIRALRTQFMLDQLNDLQSKERMLNETNKTLRLRLADGYQMPLQLNPNQEDHHVDYGRHDQQQQQNSHHAFFQPLECEPILQMGYQGQQDHGMEAGPSENNYMLGWLPYDTNSI</sequence>
<keyword id="KW-0238">DNA-binding</keyword>
<keyword id="KW-0539">Nucleus</keyword>
<keyword id="KW-0804">Transcription</keyword>
<keyword id="KW-0805">Transcription regulation</keyword>
<reference key="1">
    <citation type="journal article" date="1997" name="Plant Mol. Biol.">
        <title>Characterization of SaMADS D from Sinapis alba suggests a dual function of the gene: in inflorescence development and floral organogenesis.</title>
        <authorList>
            <person name="Bonhomme F."/>
            <person name="Sommer H."/>
            <person name="Bernier G."/>
            <person name="Jacqmard A."/>
        </authorList>
    </citation>
    <scope>NUCLEOTIDE SEQUENCE [MRNA]</scope>
    <source>
        <tissue>Flower</tissue>
    </source>
</reference>
<feature type="chain" id="PRO_0000199466" description="Agamous-like MADS-box protein AGL9 homolog">
    <location>
        <begin position="1"/>
        <end position="254"/>
    </location>
</feature>
<feature type="domain" description="MADS-box" evidence="1">
    <location>
        <begin position="3"/>
        <end position="57"/>
    </location>
</feature>
<feature type="domain" description="K-box" evidence="2">
    <location>
        <begin position="91"/>
        <end position="181"/>
    </location>
</feature>
<organism>
    <name type="scientific">Sinapis alba</name>
    <name type="common">White mustard</name>
    <name type="synonym">Brassica hirta</name>
    <dbReference type="NCBI Taxonomy" id="3728"/>
    <lineage>
        <taxon>Eukaryota</taxon>
        <taxon>Viridiplantae</taxon>
        <taxon>Streptophyta</taxon>
        <taxon>Embryophyta</taxon>
        <taxon>Tracheophyta</taxon>
        <taxon>Spermatophyta</taxon>
        <taxon>Magnoliopsida</taxon>
        <taxon>eudicotyledons</taxon>
        <taxon>Gunneridae</taxon>
        <taxon>Pentapetalae</taxon>
        <taxon>rosids</taxon>
        <taxon>malvids</taxon>
        <taxon>Brassicales</taxon>
        <taxon>Brassicaceae</taxon>
        <taxon>Brassiceae</taxon>
        <taxon>Sinapis</taxon>
    </lineage>
</organism>
<proteinExistence type="evidence at transcript level"/>
<accession>O04067</accession>
<gene>
    <name type="primary">AGL9</name>
</gene>
<name>AGL9_SINAL</name>
<dbReference type="EMBL" id="Y08626">
    <property type="protein sequence ID" value="CAA69916.1"/>
    <property type="molecule type" value="mRNA"/>
</dbReference>
<dbReference type="PIR" id="T10467">
    <property type="entry name" value="T10467"/>
</dbReference>
<dbReference type="SMR" id="O04067"/>
<dbReference type="GO" id="GO:0005634">
    <property type="term" value="C:nucleus"/>
    <property type="evidence" value="ECO:0007669"/>
    <property type="project" value="UniProtKB-SubCell"/>
</dbReference>
<dbReference type="GO" id="GO:0003700">
    <property type="term" value="F:DNA-binding transcription factor activity"/>
    <property type="evidence" value="ECO:0007669"/>
    <property type="project" value="InterPro"/>
</dbReference>
<dbReference type="GO" id="GO:0046983">
    <property type="term" value="F:protein dimerization activity"/>
    <property type="evidence" value="ECO:0007669"/>
    <property type="project" value="InterPro"/>
</dbReference>
<dbReference type="GO" id="GO:0000977">
    <property type="term" value="F:RNA polymerase II transcription regulatory region sequence-specific DNA binding"/>
    <property type="evidence" value="ECO:0007669"/>
    <property type="project" value="InterPro"/>
</dbReference>
<dbReference type="GO" id="GO:0045944">
    <property type="term" value="P:positive regulation of transcription by RNA polymerase II"/>
    <property type="evidence" value="ECO:0007669"/>
    <property type="project" value="InterPro"/>
</dbReference>
<dbReference type="CDD" id="cd00265">
    <property type="entry name" value="MADS_MEF2_like"/>
    <property type="match status" value="1"/>
</dbReference>
<dbReference type="FunFam" id="3.40.1810.10:FF:000004">
    <property type="entry name" value="MADS-box transcription factor 1"/>
    <property type="match status" value="1"/>
</dbReference>
<dbReference type="Gene3D" id="3.40.1810.10">
    <property type="entry name" value="Transcription factor, MADS-box"/>
    <property type="match status" value="1"/>
</dbReference>
<dbReference type="InterPro" id="IPR050142">
    <property type="entry name" value="MADS-box/MEF2_TF"/>
</dbReference>
<dbReference type="InterPro" id="IPR033896">
    <property type="entry name" value="MEF2-like_N"/>
</dbReference>
<dbReference type="InterPro" id="IPR002487">
    <property type="entry name" value="TF_Kbox"/>
</dbReference>
<dbReference type="InterPro" id="IPR002100">
    <property type="entry name" value="TF_MADSbox"/>
</dbReference>
<dbReference type="InterPro" id="IPR036879">
    <property type="entry name" value="TF_MADSbox_sf"/>
</dbReference>
<dbReference type="PANTHER" id="PTHR48019">
    <property type="entry name" value="SERUM RESPONSE FACTOR HOMOLOG"/>
    <property type="match status" value="1"/>
</dbReference>
<dbReference type="Pfam" id="PF01486">
    <property type="entry name" value="K-box"/>
    <property type="match status" value="1"/>
</dbReference>
<dbReference type="Pfam" id="PF00319">
    <property type="entry name" value="SRF-TF"/>
    <property type="match status" value="1"/>
</dbReference>
<dbReference type="PRINTS" id="PR00404">
    <property type="entry name" value="MADSDOMAIN"/>
</dbReference>
<dbReference type="SMART" id="SM00432">
    <property type="entry name" value="MADS"/>
    <property type="match status" value="1"/>
</dbReference>
<dbReference type="SUPFAM" id="SSF55455">
    <property type="entry name" value="SRF-like"/>
    <property type="match status" value="1"/>
</dbReference>
<dbReference type="PROSITE" id="PS51297">
    <property type="entry name" value="K_BOX"/>
    <property type="match status" value="1"/>
</dbReference>
<dbReference type="PROSITE" id="PS00350">
    <property type="entry name" value="MADS_BOX_1"/>
    <property type="match status" value="1"/>
</dbReference>
<dbReference type="PROSITE" id="PS50066">
    <property type="entry name" value="MADS_BOX_2"/>
    <property type="match status" value="1"/>
</dbReference>
<evidence type="ECO:0000255" key="1">
    <source>
        <dbReference type="PROSITE-ProRule" id="PRU00251"/>
    </source>
</evidence>
<evidence type="ECO:0000255" key="2">
    <source>
        <dbReference type="PROSITE-ProRule" id="PRU00629"/>
    </source>
</evidence>
<comment type="function">
    <text>Probable transcription factor active in inflorescence development and floral organogenesis.</text>
</comment>
<comment type="subcellular location">
    <subcellularLocation>
        <location evidence="1">Nucleus</location>
    </subcellularLocation>
</comment>
<protein>
    <recommendedName>
        <fullName>Agamous-like MADS-box protein AGL9 homolog</fullName>
    </recommendedName>
    <alternativeName>
        <fullName>MADS D</fullName>
    </alternativeName>
</protein>